<evidence type="ECO:0000250" key="1"/>
<evidence type="ECO:0000255" key="2">
    <source>
        <dbReference type="HAMAP-Rule" id="MF_00103"/>
    </source>
</evidence>
<comment type="function">
    <text evidence="2">Involved in base excision repair of DNA damaged by oxidation or by mutagenic agents. Acts as a DNA glycosylase that recognizes and removes damaged bases. Has a preference for oxidized purines, such as 7,8-dihydro-8-oxoguanine (8-oxoG). Has AP (apurinic/apyrimidinic) lyase activity and introduces nicks in the DNA strand. Cleaves the DNA backbone by beta-delta elimination to generate a single-strand break at the site of the removed base with both 3'- and 5'-phosphates.</text>
</comment>
<comment type="catalytic activity">
    <reaction evidence="2">
        <text>Hydrolysis of DNA containing ring-opened 7-methylguanine residues, releasing 2,6-diamino-4-hydroxy-5-(N-methyl)formamidopyrimidine.</text>
        <dbReference type="EC" id="3.2.2.23"/>
    </reaction>
</comment>
<comment type="catalytic activity">
    <reaction evidence="2">
        <text>2'-deoxyribonucleotide-(2'-deoxyribose 5'-phosphate)-2'-deoxyribonucleotide-DNA = a 3'-end 2'-deoxyribonucleotide-(2,3-dehydro-2,3-deoxyribose 5'-phosphate)-DNA + a 5'-end 5'-phospho-2'-deoxyribonucleoside-DNA + H(+)</text>
        <dbReference type="Rhea" id="RHEA:66592"/>
        <dbReference type="Rhea" id="RHEA-COMP:13180"/>
        <dbReference type="Rhea" id="RHEA-COMP:16897"/>
        <dbReference type="Rhea" id="RHEA-COMP:17067"/>
        <dbReference type="ChEBI" id="CHEBI:15378"/>
        <dbReference type="ChEBI" id="CHEBI:136412"/>
        <dbReference type="ChEBI" id="CHEBI:157695"/>
        <dbReference type="ChEBI" id="CHEBI:167181"/>
        <dbReference type="EC" id="4.2.99.18"/>
    </reaction>
</comment>
<comment type="cofactor">
    <cofactor evidence="2">
        <name>Zn(2+)</name>
        <dbReference type="ChEBI" id="CHEBI:29105"/>
    </cofactor>
    <text evidence="2">Binds 1 zinc ion per subunit.</text>
</comment>
<comment type="subunit">
    <text evidence="2">Monomer.</text>
</comment>
<comment type="similarity">
    <text evidence="2">Belongs to the FPG family.</text>
</comment>
<name>FPG_BURPS</name>
<keyword id="KW-0227">DNA damage</keyword>
<keyword id="KW-0234">DNA repair</keyword>
<keyword id="KW-0238">DNA-binding</keyword>
<keyword id="KW-0326">Glycosidase</keyword>
<keyword id="KW-0378">Hydrolase</keyword>
<keyword id="KW-0456">Lyase</keyword>
<keyword id="KW-0479">Metal-binding</keyword>
<keyword id="KW-0511">Multifunctional enzyme</keyword>
<keyword id="KW-1185">Reference proteome</keyword>
<keyword id="KW-0862">Zinc</keyword>
<keyword id="KW-0863">Zinc-finger</keyword>
<dbReference type="EC" id="3.2.2.23" evidence="2"/>
<dbReference type="EC" id="4.2.99.18" evidence="2"/>
<dbReference type="EMBL" id="BX571965">
    <property type="protein sequence ID" value="CAH34515.1"/>
    <property type="molecule type" value="Genomic_DNA"/>
</dbReference>
<dbReference type="RefSeq" id="WP_004522858.1">
    <property type="nucleotide sequence ID" value="NZ_CP009538.1"/>
</dbReference>
<dbReference type="RefSeq" id="YP_107151.1">
    <property type="nucleotide sequence ID" value="NC_006350.1"/>
</dbReference>
<dbReference type="SMR" id="Q63XL4"/>
<dbReference type="STRING" id="272560.BPSL0526"/>
<dbReference type="GeneID" id="93059047"/>
<dbReference type="KEGG" id="bps:BPSL0526"/>
<dbReference type="PATRIC" id="fig|272560.51.peg.1122"/>
<dbReference type="eggNOG" id="COG0266">
    <property type="taxonomic scope" value="Bacteria"/>
</dbReference>
<dbReference type="Proteomes" id="UP000000605">
    <property type="component" value="Chromosome 1"/>
</dbReference>
<dbReference type="GO" id="GO:0034039">
    <property type="term" value="F:8-oxo-7,8-dihydroguanine DNA N-glycosylase activity"/>
    <property type="evidence" value="ECO:0007669"/>
    <property type="project" value="TreeGrafter"/>
</dbReference>
<dbReference type="GO" id="GO:0140078">
    <property type="term" value="F:class I DNA-(apurinic or apyrimidinic site) endonuclease activity"/>
    <property type="evidence" value="ECO:0007669"/>
    <property type="project" value="UniProtKB-EC"/>
</dbReference>
<dbReference type="GO" id="GO:0003684">
    <property type="term" value="F:damaged DNA binding"/>
    <property type="evidence" value="ECO:0007669"/>
    <property type="project" value="InterPro"/>
</dbReference>
<dbReference type="GO" id="GO:0008270">
    <property type="term" value="F:zinc ion binding"/>
    <property type="evidence" value="ECO:0007669"/>
    <property type="project" value="UniProtKB-UniRule"/>
</dbReference>
<dbReference type="GO" id="GO:0006284">
    <property type="term" value="P:base-excision repair"/>
    <property type="evidence" value="ECO:0007669"/>
    <property type="project" value="InterPro"/>
</dbReference>
<dbReference type="CDD" id="cd08966">
    <property type="entry name" value="EcFpg-like_N"/>
    <property type="match status" value="1"/>
</dbReference>
<dbReference type="FunFam" id="1.10.8.50:FF:000003">
    <property type="entry name" value="Formamidopyrimidine-DNA glycosylase"/>
    <property type="match status" value="1"/>
</dbReference>
<dbReference type="FunFam" id="3.20.190.10:FF:000001">
    <property type="entry name" value="Formamidopyrimidine-DNA glycosylase"/>
    <property type="match status" value="1"/>
</dbReference>
<dbReference type="Gene3D" id="1.10.8.50">
    <property type="match status" value="1"/>
</dbReference>
<dbReference type="Gene3D" id="3.20.190.10">
    <property type="entry name" value="MutM-like, N-terminal"/>
    <property type="match status" value="1"/>
</dbReference>
<dbReference type="HAMAP" id="MF_00103">
    <property type="entry name" value="Fapy_DNA_glycosyl"/>
    <property type="match status" value="1"/>
</dbReference>
<dbReference type="InterPro" id="IPR015886">
    <property type="entry name" value="DNA_glyclase/AP_lyase_DNA-bd"/>
</dbReference>
<dbReference type="InterPro" id="IPR015887">
    <property type="entry name" value="DNA_glyclase_Znf_dom_DNA_BS"/>
</dbReference>
<dbReference type="InterPro" id="IPR020629">
    <property type="entry name" value="Formamido-pyr_DNA_Glyclase"/>
</dbReference>
<dbReference type="InterPro" id="IPR012319">
    <property type="entry name" value="FPG_cat"/>
</dbReference>
<dbReference type="InterPro" id="IPR035937">
    <property type="entry name" value="MutM-like_N-ter"/>
</dbReference>
<dbReference type="InterPro" id="IPR010979">
    <property type="entry name" value="Ribosomal_uS13-like_H2TH"/>
</dbReference>
<dbReference type="InterPro" id="IPR000214">
    <property type="entry name" value="Znf_DNA_glyclase/AP_lyase"/>
</dbReference>
<dbReference type="InterPro" id="IPR010663">
    <property type="entry name" value="Znf_FPG/IleRS"/>
</dbReference>
<dbReference type="NCBIfam" id="TIGR00577">
    <property type="entry name" value="fpg"/>
    <property type="match status" value="1"/>
</dbReference>
<dbReference type="NCBIfam" id="NF002211">
    <property type="entry name" value="PRK01103.1"/>
    <property type="match status" value="1"/>
</dbReference>
<dbReference type="PANTHER" id="PTHR22993">
    <property type="entry name" value="FORMAMIDOPYRIMIDINE-DNA GLYCOSYLASE"/>
    <property type="match status" value="1"/>
</dbReference>
<dbReference type="PANTHER" id="PTHR22993:SF9">
    <property type="entry name" value="FORMAMIDOPYRIMIDINE-DNA GLYCOSYLASE"/>
    <property type="match status" value="1"/>
</dbReference>
<dbReference type="Pfam" id="PF01149">
    <property type="entry name" value="Fapy_DNA_glyco"/>
    <property type="match status" value="1"/>
</dbReference>
<dbReference type="Pfam" id="PF06831">
    <property type="entry name" value="H2TH"/>
    <property type="match status" value="1"/>
</dbReference>
<dbReference type="Pfam" id="PF06827">
    <property type="entry name" value="zf-FPG_IleRS"/>
    <property type="match status" value="1"/>
</dbReference>
<dbReference type="SMART" id="SM00898">
    <property type="entry name" value="Fapy_DNA_glyco"/>
    <property type="match status" value="1"/>
</dbReference>
<dbReference type="SMART" id="SM01232">
    <property type="entry name" value="H2TH"/>
    <property type="match status" value="1"/>
</dbReference>
<dbReference type="SUPFAM" id="SSF57716">
    <property type="entry name" value="Glucocorticoid receptor-like (DNA-binding domain)"/>
    <property type="match status" value="1"/>
</dbReference>
<dbReference type="SUPFAM" id="SSF81624">
    <property type="entry name" value="N-terminal domain of MutM-like DNA repair proteins"/>
    <property type="match status" value="1"/>
</dbReference>
<dbReference type="SUPFAM" id="SSF46946">
    <property type="entry name" value="S13-like H2TH domain"/>
    <property type="match status" value="1"/>
</dbReference>
<dbReference type="PROSITE" id="PS51068">
    <property type="entry name" value="FPG_CAT"/>
    <property type="match status" value="1"/>
</dbReference>
<dbReference type="PROSITE" id="PS01242">
    <property type="entry name" value="ZF_FPG_1"/>
    <property type="match status" value="1"/>
</dbReference>
<dbReference type="PROSITE" id="PS51066">
    <property type="entry name" value="ZF_FPG_2"/>
    <property type="match status" value="1"/>
</dbReference>
<proteinExistence type="inferred from homology"/>
<feature type="initiator methionine" description="Removed" evidence="1">
    <location>
        <position position="1"/>
    </location>
</feature>
<feature type="chain" id="PRO_0000228422" description="Formamidopyrimidine-DNA glycosylase">
    <location>
        <begin position="2"/>
        <end position="276"/>
    </location>
</feature>
<feature type="zinc finger region" description="FPG-type" evidence="2">
    <location>
        <begin position="242"/>
        <end position="276"/>
    </location>
</feature>
<feature type="active site" description="Schiff-base intermediate with DNA" evidence="2">
    <location>
        <position position="2"/>
    </location>
</feature>
<feature type="active site" description="Proton donor" evidence="2">
    <location>
        <position position="3"/>
    </location>
</feature>
<feature type="active site" description="Proton donor; for beta-elimination activity" evidence="2">
    <location>
        <position position="58"/>
    </location>
</feature>
<feature type="active site" description="Proton donor; for delta-elimination activity" evidence="2">
    <location>
        <position position="266"/>
    </location>
</feature>
<feature type="binding site" evidence="2">
    <location>
        <position position="94"/>
    </location>
    <ligand>
        <name>DNA</name>
        <dbReference type="ChEBI" id="CHEBI:16991"/>
    </ligand>
</feature>
<feature type="binding site" evidence="2">
    <location>
        <position position="112"/>
    </location>
    <ligand>
        <name>DNA</name>
        <dbReference type="ChEBI" id="CHEBI:16991"/>
    </ligand>
</feature>
<feature type="binding site" evidence="2">
    <location>
        <position position="157"/>
    </location>
    <ligand>
        <name>DNA</name>
        <dbReference type="ChEBI" id="CHEBI:16991"/>
    </ligand>
</feature>
<sequence length="276" mass="30658">MPELPEVEVTRRGIEPFVAGRRVERVDVRTAMLRWPVPAGFAEMLRSREVLRVERRGKYLLFEVDAGWFIVHLGMTGTLRVLPNDAPPPAPAKHDHVDWIFDEFVLRFRDPRRFGAVLWHPRDAGDVHAHPLLASLGVEPFSAAFSGALLFGRTRGRTVSVKQALLAGDIVVGVGNIYASESLFRAGIRPTTAAGRVSLPRYERLADAVRATLADAIERGGSTLRDFVGSNGESGYFQLDCFVYDRAGEPCRVCGAPIRQIVQGQRSTYFCPNCQR</sequence>
<accession>Q63XL4</accession>
<gene>
    <name evidence="2" type="primary">mutM</name>
    <name evidence="2" type="synonym">fpg</name>
    <name type="ordered locus">BPSL0526</name>
</gene>
<reference key="1">
    <citation type="journal article" date="2004" name="Proc. Natl. Acad. Sci. U.S.A.">
        <title>Genomic plasticity of the causative agent of melioidosis, Burkholderia pseudomallei.</title>
        <authorList>
            <person name="Holden M.T.G."/>
            <person name="Titball R.W."/>
            <person name="Peacock S.J."/>
            <person name="Cerdeno-Tarraga A.-M."/>
            <person name="Atkins T."/>
            <person name="Crossman L.C."/>
            <person name="Pitt T."/>
            <person name="Churcher C."/>
            <person name="Mungall K.L."/>
            <person name="Bentley S.D."/>
            <person name="Sebaihia M."/>
            <person name="Thomson N.R."/>
            <person name="Bason N."/>
            <person name="Beacham I.R."/>
            <person name="Brooks K."/>
            <person name="Brown K.A."/>
            <person name="Brown N.F."/>
            <person name="Challis G.L."/>
            <person name="Cherevach I."/>
            <person name="Chillingworth T."/>
            <person name="Cronin A."/>
            <person name="Crossett B."/>
            <person name="Davis P."/>
            <person name="DeShazer D."/>
            <person name="Feltwell T."/>
            <person name="Fraser A."/>
            <person name="Hance Z."/>
            <person name="Hauser H."/>
            <person name="Holroyd S."/>
            <person name="Jagels K."/>
            <person name="Keith K.E."/>
            <person name="Maddison M."/>
            <person name="Moule S."/>
            <person name="Price C."/>
            <person name="Quail M.A."/>
            <person name="Rabbinowitsch E."/>
            <person name="Rutherford K."/>
            <person name="Sanders M."/>
            <person name="Simmonds M."/>
            <person name="Songsivilai S."/>
            <person name="Stevens K."/>
            <person name="Tumapa S."/>
            <person name="Vesaratchavest M."/>
            <person name="Whitehead S."/>
            <person name="Yeats C."/>
            <person name="Barrell B.G."/>
            <person name="Oyston P.C.F."/>
            <person name="Parkhill J."/>
        </authorList>
    </citation>
    <scope>NUCLEOTIDE SEQUENCE [LARGE SCALE GENOMIC DNA]</scope>
    <source>
        <strain>K96243</strain>
    </source>
</reference>
<organism>
    <name type="scientific">Burkholderia pseudomallei (strain K96243)</name>
    <dbReference type="NCBI Taxonomy" id="272560"/>
    <lineage>
        <taxon>Bacteria</taxon>
        <taxon>Pseudomonadati</taxon>
        <taxon>Pseudomonadota</taxon>
        <taxon>Betaproteobacteria</taxon>
        <taxon>Burkholderiales</taxon>
        <taxon>Burkholderiaceae</taxon>
        <taxon>Burkholderia</taxon>
        <taxon>pseudomallei group</taxon>
    </lineage>
</organism>
<protein>
    <recommendedName>
        <fullName evidence="2">Formamidopyrimidine-DNA glycosylase</fullName>
        <shortName evidence="2">Fapy-DNA glycosylase</shortName>
        <ecNumber evidence="2">3.2.2.23</ecNumber>
    </recommendedName>
    <alternativeName>
        <fullName evidence="2">DNA-(apurinic or apyrimidinic site) lyase MutM</fullName>
        <shortName evidence="2">AP lyase MutM</shortName>
        <ecNumber evidence="2">4.2.99.18</ecNumber>
    </alternativeName>
</protein>